<protein>
    <recommendedName>
        <fullName evidence="5">Conotoxin S4.3</fullName>
    </recommendedName>
    <alternativeName>
        <fullName evidence="3">KappaA-conotoxin</fullName>
    </alternativeName>
</protein>
<comment type="function">
    <text evidence="6">Probable neurotoxin with ion channel inhibitor activity.</text>
</comment>
<comment type="subcellular location">
    <subcellularLocation>
        <location evidence="7">Secreted</location>
    </subcellularLocation>
</comment>
<comment type="tissue specificity">
    <text evidence="7">Expressed by the venom duct.</text>
</comment>
<comment type="domain">
    <text evidence="6">The cysteine framework is IV (CC-C-C-C-C).</text>
</comment>
<comment type="PTM">
    <text evidence="4">Contains 3 disulfide bonds.</text>
</comment>
<comment type="similarity">
    <text evidence="6">Belongs to the conotoxin A superfamily.</text>
</comment>
<accession>P0C830</accession>
<evidence type="ECO:0000250" key="1">
    <source>
        <dbReference type="UniProtKB" id="P0C1X1"/>
    </source>
</evidence>
<evidence type="ECO:0000250" key="2">
    <source>
        <dbReference type="UniProtKB" id="P0C828"/>
    </source>
</evidence>
<evidence type="ECO:0000250" key="3">
    <source>
        <dbReference type="UniProtKB" id="P0C829"/>
    </source>
</evidence>
<evidence type="ECO:0000250" key="4">
    <source>
        <dbReference type="UniProtKB" id="P0DQY7"/>
    </source>
</evidence>
<evidence type="ECO:0000303" key="5">
    <source>
    </source>
</evidence>
<evidence type="ECO:0000305" key="6"/>
<evidence type="ECO:0000305" key="7">
    <source>
    </source>
</evidence>
<name>CA43_CONST</name>
<sequence>QKELVPSKTTTCCGYSPGTMCPSCMCTNTCPPQK</sequence>
<proteinExistence type="inferred from homology"/>
<reference key="1">
    <citation type="journal article" date="2006" name="Biochimie">
        <title>Analysis of expressed sequence tags from the venom ducts of Conus striatus: focusing on the expression profile of conotoxins.</title>
        <authorList>
            <person name="Pi C."/>
            <person name="Liu Y."/>
            <person name="Peng C."/>
            <person name="Jiang X."/>
            <person name="Liu J."/>
            <person name="Xu B."/>
            <person name="Yu X."/>
            <person name="Yu Y."/>
            <person name="Jiang X."/>
            <person name="Wang L."/>
            <person name="Dong M."/>
            <person name="Chen S."/>
            <person name="Xu A.-L."/>
        </authorList>
    </citation>
    <scope>NUCLEOTIDE SEQUENCE [MRNA]</scope>
    <source>
        <tissue>Venom duct</tissue>
    </source>
</reference>
<feature type="peptide" id="PRO_0000345099" description="Conotoxin S4.3" evidence="7">
    <location>
        <begin position="1"/>
        <end position="34"/>
    </location>
</feature>
<feature type="modified residue" description="Pyrrolidone carboxylic acid" evidence="2">
    <location>
        <position position="1"/>
    </location>
</feature>
<feature type="modified residue" description="4-carboxyglutamate" evidence="1">
    <location>
        <position position="3"/>
    </location>
</feature>
<feature type="modified residue" description="4-hydroxyproline" evidence="1">
    <location>
        <position position="17"/>
    </location>
</feature>
<feature type="modified residue" description="4-hydroxyproline" evidence="1">
    <location>
        <position position="22"/>
    </location>
</feature>
<feature type="modified residue" description="4-hydroxyproline" evidence="1">
    <location>
        <position position="31"/>
    </location>
</feature>
<feature type="modified residue" description="4-hydroxyproline" evidence="1">
    <location>
        <position position="32"/>
    </location>
</feature>
<feature type="glycosylation site" description="O-linked (HexNAc...) serine" evidence="2">
    <location>
        <position position="7"/>
    </location>
</feature>
<feature type="glycosylation site" description="O-linked (HexNAc...) threonine" evidence="1">
    <location>
        <position position="9"/>
    </location>
</feature>
<keyword id="KW-1015">Disulfide bond</keyword>
<keyword id="KW-0301">Gamma-carboxyglutamic acid</keyword>
<keyword id="KW-0325">Glycoprotein</keyword>
<keyword id="KW-0379">Hydroxylation</keyword>
<keyword id="KW-0872">Ion channel impairing toxin</keyword>
<keyword id="KW-0528">Neurotoxin</keyword>
<keyword id="KW-0873">Pyrrolidone carboxylic acid</keyword>
<keyword id="KW-0964">Secreted</keyword>
<keyword id="KW-0800">Toxin</keyword>
<dbReference type="SMR" id="P0C830"/>
<dbReference type="ConoServer" id="3547">
    <property type="toxin name" value="S4.3"/>
</dbReference>
<dbReference type="GO" id="GO:0005576">
    <property type="term" value="C:extracellular region"/>
    <property type="evidence" value="ECO:0007669"/>
    <property type="project" value="UniProtKB-SubCell"/>
</dbReference>
<dbReference type="GO" id="GO:0099106">
    <property type="term" value="F:ion channel regulator activity"/>
    <property type="evidence" value="ECO:0007669"/>
    <property type="project" value="UniProtKB-KW"/>
</dbReference>
<dbReference type="GO" id="GO:0090729">
    <property type="term" value="F:toxin activity"/>
    <property type="evidence" value="ECO:0007669"/>
    <property type="project" value="UniProtKB-KW"/>
</dbReference>
<organism>
    <name type="scientific">Conus striatus</name>
    <name type="common">Striated cone</name>
    <dbReference type="NCBI Taxonomy" id="6493"/>
    <lineage>
        <taxon>Eukaryota</taxon>
        <taxon>Metazoa</taxon>
        <taxon>Spiralia</taxon>
        <taxon>Lophotrochozoa</taxon>
        <taxon>Mollusca</taxon>
        <taxon>Gastropoda</taxon>
        <taxon>Caenogastropoda</taxon>
        <taxon>Neogastropoda</taxon>
        <taxon>Conoidea</taxon>
        <taxon>Conidae</taxon>
        <taxon>Conus</taxon>
        <taxon>Pionoconus</taxon>
    </lineage>
</organism>